<protein>
    <recommendedName>
        <fullName>COPII coat assembly protein SEC16</fullName>
    </recommendedName>
    <alternativeName>
        <fullName>Protein transport protein SEC16</fullName>
    </alternativeName>
</protein>
<dbReference type="EMBL" id="CH445326">
    <property type="protein sequence ID" value="EAT90997.2"/>
    <property type="molecule type" value="Genomic_DNA"/>
</dbReference>
<dbReference type="RefSeq" id="XP_001791990.1">
    <property type="nucleotide sequence ID" value="XM_001791938.1"/>
</dbReference>
<dbReference type="SMR" id="Q0V3R6"/>
<dbReference type="STRING" id="321614.Q0V3R6"/>
<dbReference type="EnsemblFungi" id="SNOT_01348">
    <property type="protein sequence ID" value="SNOT_01348"/>
    <property type="gene ID" value="SNOG_01348"/>
</dbReference>
<dbReference type="GeneID" id="5968835"/>
<dbReference type="KEGG" id="pno:SNOG_01348"/>
<dbReference type="VEuPathDB" id="FungiDB:JI435_013480"/>
<dbReference type="eggNOG" id="KOG1913">
    <property type="taxonomic scope" value="Eukaryota"/>
</dbReference>
<dbReference type="HOGENOM" id="CLU_001147_1_0_1"/>
<dbReference type="InParanoid" id="Q0V3R6"/>
<dbReference type="Proteomes" id="UP000001055">
    <property type="component" value="Unassembled WGS sequence"/>
</dbReference>
<dbReference type="GO" id="GO:0070971">
    <property type="term" value="C:endoplasmic reticulum exit site"/>
    <property type="evidence" value="ECO:0000318"/>
    <property type="project" value="GO_Central"/>
</dbReference>
<dbReference type="GO" id="GO:0005789">
    <property type="term" value="C:endoplasmic reticulum membrane"/>
    <property type="evidence" value="ECO:0007669"/>
    <property type="project" value="UniProtKB-SubCell"/>
</dbReference>
<dbReference type="GO" id="GO:0012507">
    <property type="term" value="C:ER to Golgi transport vesicle membrane"/>
    <property type="evidence" value="ECO:0000318"/>
    <property type="project" value="GO_Central"/>
</dbReference>
<dbReference type="GO" id="GO:0006914">
    <property type="term" value="P:autophagy"/>
    <property type="evidence" value="ECO:0007669"/>
    <property type="project" value="UniProtKB-KW"/>
</dbReference>
<dbReference type="GO" id="GO:0007030">
    <property type="term" value="P:Golgi organization"/>
    <property type="evidence" value="ECO:0000318"/>
    <property type="project" value="GO_Central"/>
</dbReference>
<dbReference type="GO" id="GO:0046907">
    <property type="term" value="P:intracellular transport"/>
    <property type="evidence" value="ECO:0007669"/>
    <property type="project" value="UniProtKB-ARBA"/>
</dbReference>
<dbReference type="GO" id="GO:0070973">
    <property type="term" value="P:protein localization to endoplasmic reticulum exit site"/>
    <property type="evidence" value="ECO:0000318"/>
    <property type="project" value="GO_Central"/>
</dbReference>
<dbReference type="GO" id="GO:0015031">
    <property type="term" value="P:protein transport"/>
    <property type="evidence" value="ECO:0007669"/>
    <property type="project" value="UniProtKB-KW"/>
</dbReference>
<dbReference type="GO" id="GO:0016192">
    <property type="term" value="P:vesicle-mediated transport"/>
    <property type="evidence" value="ECO:0007669"/>
    <property type="project" value="UniProtKB-KW"/>
</dbReference>
<dbReference type="CDD" id="cd09233">
    <property type="entry name" value="ACE1-Sec16-like"/>
    <property type="match status" value="1"/>
</dbReference>
<dbReference type="FunFam" id="1.25.40.1030:FF:000008">
    <property type="entry name" value="Protein transport protein sec16"/>
    <property type="match status" value="1"/>
</dbReference>
<dbReference type="Gene3D" id="1.25.40.1030">
    <property type="match status" value="1"/>
</dbReference>
<dbReference type="InterPro" id="IPR024340">
    <property type="entry name" value="Sec16_CCD"/>
</dbReference>
<dbReference type="InterPro" id="IPR024298">
    <property type="entry name" value="Sec16_Sec23-bd"/>
</dbReference>
<dbReference type="PANTHER" id="PTHR13402">
    <property type="entry name" value="RGPR-RELATED"/>
    <property type="match status" value="1"/>
</dbReference>
<dbReference type="PANTHER" id="PTHR13402:SF6">
    <property type="entry name" value="SECRETORY 16, ISOFORM I"/>
    <property type="match status" value="1"/>
</dbReference>
<dbReference type="Pfam" id="PF12932">
    <property type="entry name" value="Sec16"/>
    <property type="match status" value="1"/>
</dbReference>
<dbReference type="Pfam" id="PF12931">
    <property type="entry name" value="TPR_Sec16"/>
    <property type="match status" value="1"/>
</dbReference>
<gene>
    <name type="primary">SEC16</name>
    <name type="ORF">SNOG_01348</name>
</gene>
<feature type="chain" id="PRO_0000295541" description="COPII coat assembly protein SEC16">
    <location>
        <begin position="1"/>
        <end position="1776"/>
    </location>
</feature>
<feature type="region of interest" description="Disordered" evidence="2">
    <location>
        <begin position="1"/>
        <end position="129"/>
    </location>
</feature>
<feature type="region of interest" description="Disordered" evidence="2">
    <location>
        <begin position="143"/>
        <end position="277"/>
    </location>
</feature>
<feature type="region of interest" description="Disordered" evidence="2">
    <location>
        <begin position="292"/>
        <end position="817"/>
    </location>
</feature>
<feature type="region of interest" description="Disordered" evidence="2">
    <location>
        <begin position="1428"/>
        <end position="1776"/>
    </location>
</feature>
<feature type="compositionally biased region" description="Acidic residues" evidence="2">
    <location>
        <begin position="46"/>
        <end position="79"/>
    </location>
</feature>
<feature type="compositionally biased region" description="Polar residues" evidence="2">
    <location>
        <begin position="111"/>
        <end position="124"/>
    </location>
</feature>
<feature type="compositionally biased region" description="Polar residues" evidence="2">
    <location>
        <begin position="144"/>
        <end position="158"/>
    </location>
</feature>
<feature type="compositionally biased region" description="Acidic residues" evidence="2">
    <location>
        <begin position="162"/>
        <end position="181"/>
    </location>
</feature>
<feature type="compositionally biased region" description="Basic and acidic residues" evidence="2">
    <location>
        <begin position="187"/>
        <end position="196"/>
    </location>
</feature>
<feature type="compositionally biased region" description="Acidic residues" evidence="2">
    <location>
        <begin position="217"/>
        <end position="226"/>
    </location>
</feature>
<feature type="compositionally biased region" description="Acidic residues" evidence="2">
    <location>
        <begin position="321"/>
        <end position="353"/>
    </location>
</feature>
<feature type="compositionally biased region" description="Polar residues" evidence="2">
    <location>
        <begin position="394"/>
        <end position="406"/>
    </location>
</feature>
<feature type="compositionally biased region" description="Polar residues" evidence="2">
    <location>
        <begin position="415"/>
        <end position="439"/>
    </location>
</feature>
<feature type="compositionally biased region" description="Pro residues" evidence="2">
    <location>
        <begin position="522"/>
        <end position="533"/>
    </location>
</feature>
<feature type="compositionally biased region" description="Low complexity" evidence="2">
    <location>
        <begin position="557"/>
        <end position="573"/>
    </location>
</feature>
<feature type="compositionally biased region" description="Polar residues" evidence="2">
    <location>
        <begin position="612"/>
        <end position="627"/>
    </location>
</feature>
<feature type="compositionally biased region" description="Pro residues" evidence="2">
    <location>
        <begin position="629"/>
        <end position="644"/>
    </location>
</feature>
<feature type="compositionally biased region" description="Polar residues" evidence="2">
    <location>
        <begin position="692"/>
        <end position="704"/>
    </location>
</feature>
<feature type="compositionally biased region" description="Polar residues" evidence="2">
    <location>
        <begin position="716"/>
        <end position="734"/>
    </location>
</feature>
<feature type="compositionally biased region" description="Low complexity" evidence="2">
    <location>
        <begin position="761"/>
        <end position="782"/>
    </location>
</feature>
<feature type="compositionally biased region" description="Polar residues" evidence="2">
    <location>
        <begin position="1445"/>
        <end position="1454"/>
    </location>
</feature>
<feature type="compositionally biased region" description="Polar residues" evidence="2">
    <location>
        <begin position="1477"/>
        <end position="1496"/>
    </location>
</feature>
<feature type="compositionally biased region" description="Basic and acidic residues" evidence="2">
    <location>
        <begin position="1560"/>
        <end position="1586"/>
    </location>
</feature>
<feature type="compositionally biased region" description="Low complexity" evidence="2">
    <location>
        <begin position="1652"/>
        <end position="1661"/>
    </location>
</feature>
<feature type="compositionally biased region" description="Pro residues" evidence="2">
    <location>
        <begin position="1662"/>
        <end position="1671"/>
    </location>
</feature>
<keyword id="KW-0072">Autophagy</keyword>
<keyword id="KW-0256">Endoplasmic reticulum</keyword>
<keyword id="KW-0931">ER-Golgi transport</keyword>
<keyword id="KW-0472">Membrane</keyword>
<keyword id="KW-0653">Protein transport</keyword>
<keyword id="KW-0813">Transport</keyword>
<name>SEC16_PHANO</name>
<comment type="function">
    <text evidence="1">Involved in the initiation of assembly of the COPII coat required for the formation of transport vesicles from the endoplasmic reticulum (ER) and the selection of cargo molecules. Also involved in autophagy (By similarity).</text>
</comment>
<comment type="subcellular location">
    <subcellularLocation>
        <location evidence="1">Endoplasmic reticulum membrane</location>
        <topology evidence="1">Peripheral membrane protein</topology>
        <orientation evidence="1">Cytoplasmic side</orientation>
    </subcellularLocation>
</comment>
<comment type="similarity">
    <text evidence="3">Belongs to the SEC16 family.</text>
</comment>
<proteinExistence type="inferred from homology"/>
<evidence type="ECO:0000250" key="1"/>
<evidence type="ECO:0000256" key="2">
    <source>
        <dbReference type="SAM" id="MobiDB-lite"/>
    </source>
</evidence>
<evidence type="ECO:0000305" key="3"/>
<reference key="1">
    <citation type="journal article" date="2007" name="Plant Cell">
        <title>Dothideomycete-plant interactions illuminated by genome sequencing and EST analysis of the wheat pathogen Stagonospora nodorum.</title>
        <authorList>
            <person name="Hane J.K."/>
            <person name="Lowe R.G.T."/>
            <person name="Solomon P.S."/>
            <person name="Tan K.-C."/>
            <person name="Schoch C.L."/>
            <person name="Spatafora J.W."/>
            <person name="Crous P.W."/>
            <person name="Kodira C.D."/>
            <person name="Birren B.W."/>
            <person name="Galagan J.E."/>
            <person name="Torriani S.F.F."/>
            <person name="McDonald B.A."/>
            <person name="Oliver R.P."/>
        </authorList>
    </citation>
    <scope>NUCLEOTIDE SEQUENCE [LARGE SCALE GENOMIC DNA]</scope>
    <source>
        <strain>SN15 / ATCC MYA-4574 / FGSC 10173</strain>
    </source>
</reference>
<accession>Q0V3R6</accession>
<sequence length="1776" mass="188462">MDSDGVSHAPSVAQSAPSWNPALRHEKDHAPAATAKLPSQVKPESSSEEESEEEEEEEDDDEDDEEEEDSDEDDDEEENAPAATAVSGPTPIAVLDGAQDSEDESESPSELTKSTPIVQASQGSMEKRVEVIGAEEEALVNAAQALNISGNPATGQTKAESTDEAESDEDSEEEESSDEEAAAAGEHQADNYEHQGEATALEEAVNESVRVPLVDDAAPESDDWGDSGDPFEIGGLQQDPSLQTPHAEAAGTTVGDDVIGNTTVGGNAGDDLDWGNTEEEDFFGVVANKPVESVEPAQPTQSPGAHVVQAQDAAPAKSEWDLDLDLDEDFLPDNEDGPVIELSDDEGFLDDEPTAPVEQPASTGIGGASRYAPQAAQTSHSVASPYAAPGQFANPPQGSMTRSITTPAGGVYNGYGQNVAYQQQQAARPTMPTSAQSYADKSKGGYASPYDLPDDVVTTRKRTTPRPVISATQPAIPPPRTSSMSSSSAPPRPLPPSNASVASLSPPPSGHSMQGQMTGFPPAVPPKSAPPAKAPSSDFFAELPVTSKPKPPGRYTPQPAAAAQSPSLQGPPQFTQKERTASWSSLRNEVLPDTVGAQPHLRQPEQLPMFPSQPSVPTRQNSLPIPQSTAPPPSSRYSPAPPSVPANNARYSPAPPTAQGGANSRYSPAPPGSQGAAHARYVSEPPTGPARTPSQTYAPRTSSPLAFHSTPHHQENTTNVSEQQLPGHHVTQSADGVPRAPFRSPLEGVSEALELDSTSSDRPPTTARSDTPPPTRSSTSSAIGSPRKKGNYTPQYQPMNPMAPSRSLSQSPATGMKQPGPMYGAAPIAASYGTHIQEATTTNSIPHRRQASLNYECIVPEDERAVDPLQRYKGHPVFAWGLGGTIVTTFPKQIPRYGGGMTAPMVKCSPGEIKIQSVKEIIPLAEDLAKFPGPLKAKSKKKDVLSWLTKRLESLELQIKDPNTEHTLSVDELKRLEEKTLLLKLLQFLVENDGRLEGEAANAAFKNLFSPEADNASDAEGSFSTAADIVGRSRSNTVNTPAEPIDARAIEDLQKMLARGEREKAVWHAVDQRLWGHAMLLSSTLSKDIWKQVVQEFVRNEVKKVGRSNQALAVLYEVFAGNHEDCIDELVPASARAGFQMVSTDGAGAALNAQQGLDKWRETIALILNNRSEGDVSALLSLGKLLSQYGRVEAAHICFILGRSVAHVSGVDDALADLVLIGIDHKQHPTELGVDLEPILLTEVYEFALSLSAQVNSHIMPHLQNYKLAHAYQLAEHGYRTEAQAYCDAIAAAMKATTRTSPYYNLSFIASLDDLSKRLSQSPKDSSSSWISKPSMDRVSTSLMSKFNSFIAGEDDGPSSNAATGTEVGPFAKITGDSPGLTPSHSNADLYADCFCKFKICSFKYIRTKDVIRATEIALRAAGQTFYGVERQPPPQPQLSPPSQRTQAKMQSYSPLRAEHNVSQPSYGNPYMPTPPNEETASASSFGGYQPQQGTGHSFDDPAPPTSSFDEPSYQPYNPDADDMEEDNKPKKKSIMDDDDDDLVARAAALKIGSGSNSKSDADKKADEAFRKAAEADAKRDKENAAKKAGGGWLSGWFKKDPNAAPGPIKAKLGEESSFYYDPDLGKWVNKKGGSSEPERATATPPPPKGPPMGARSASGGMPPPSGPPPSGAGLMKPPTSAPLRSSSMPPPMGLPGSRSSTPGLPSDNEGGPKPPTLARPSFGAASGPPSRPGTGMSNASSIDDLLGAPQARKGAGAKKKKGGRYVDVFPQGQAS</sequence>
<organism>
    <name type="scientific">Phaeosphaeria nodorum (strain SN15 / ATCC MYA-4574 / FGSC 10173)</name>
    <name type="common">Glume blotch fungus</name>
    <name type="synonym">Parastagonospora nodorum</name>
    <dbReference type="NCBI Taxonomy" id="321614"/>
    <lineage>
        <taxon>Eukaryota</taxon>
        <taxon>Fungi</taxon>
        <taxon>Dikarya</taxon>
        <taxon>Ascomycota</taxon>
        <taxon>Pezizomycotina</taxon>
        <taxon>Dothideomycetes</taxon>
        <taxon>Pleosporomycetidae</taxon>
        <taxon>Pleosporales</taxon>
        <taxon>Pleosporineae</taxon>
        <taxon>Phaeosphaeriaceae</taxon>
        <taxon>Parastagonospora</taxon>
    </lineage>
</organism>